<comment type="function">
    <text evidence="1">This protein specifically catalyzes the removal of signal peptides from prolipoproteins.</text>
</comment>
<comment type="catalytic activity">
    <reaction evidence="1">
        <text>Release of signal peptides from bacterial membrane prolipoproteins. Hydrolyzes -Xaa-Yaa-Zaa-|-(S,diacylglyceryl)Cys-, in which Xaa is hydrophobic (preferably Leu), and Yaa (Ala or Ser) and Zaa (Gly or Ala) have small, neutral side chains.</text>
        <dbReference type="EC" id="3.4.23.36"/>
    </reaction>
</comment>
<comment type="pathway">
    <text evidence="1">Protein modification; lipoprotein biosynthesis (signal peptide cleavage).</text>
</comment>
<comment type="subcellular location">
    <subcellularLocation>
        <location evidence="1">Cell inner membrane</location>
        <topology evidence="1">Multi-pass membrane protein</topology>
    </subcellularLocation>
</comment>
<comment type="similarity">
    <text evidence="1">Belongs to the peptidase A8 family.</text>
</comment>
<protein>
    <recommendedName>
        <fullName evidence="1">Lipoprotein signal peptidase</fullName>
        <ecNumber evidence="1">3.4.23.36</ecNumber>
    </recommendedName>
    <alternativeName>
        <fullName evidence="1">Prolipoprotein signal peptidase</fullName>
    </alternativeName>
    <alternativeName>
        <fullName evidence="1">Signal peptidase II</fullName>
        <shortName evidence="1">SPase II</shortName>
    </alternativeName>
</protein>
<organism>
    <name type="scientific">Francisella tularensis subsp. tularensis (strain FSC 198)</name>
    <dbReference type="NCBI Taxonomy" id="393115"/>
    <lineage>
        <taxon>Bacteria</taxon>
        <taxon>Pseudomonadati</taxon>
        <taxon>Pseudomonadota</taxon>
        <taxon>Gammaproteobacteria</taxon>
        <taxon>Thiotrichales</taxon>
        <taxon>Francisellaceae</taxon>
        <taxon>Francisella</taxon>
    </lineage>
</organism>
<keyword id="KW-0064">Aspartyl protease</keyword>
<keyword id="KW-0997">Cell inner membrane</keyword>
<keyword id="KW-1003">Cell membrane</keyword>
<keyword id="KW-0378">Hydrolase</keyword>
<keyword id="KW-0472">Membrane</keyword>
<keyword id="KW-0645">Protease</keyword>
<keyword id="KW-0812">Transmembrane</keyword>
<keyword id="KW-1133">Transmembrane helix</keyword>
<feature type="chain" id="PRO_0000289383" description="Lipoprotein signal peptidase">
    <location>
        <begin position="1"/>
        <end position="161"/>
    </location>
</feature>
<feature type="transmembrane region" description="Helical" evidence="1">
    <location>
        <begin position="8"/>
        <end position="28"/>
    </location>
</feature>
<feature type="transmembrane region" description="Helical" evidence="1">
    <location>
        <begin position="40"/>
        <end position="60"/>
    </location>
</feature>
<feature type="transmembrane region" description="Helical" evidence="1">
    <location>
        <begin position="67"/>
        <end position="87"/>
    </location>
</feature>
<feature type="transmembrane region" description="Helical" evidence="1">
    <location>
        <begin position="91"/>
        <end position="111"/>
    </location>
</feature>
<feature type="transmembrane region" description="Helical" evidence="1">
    <location>
        <begin position="136"/>
        <end position="156"/>
    </location>
</feature>
<feature type="active site" evidence="1">
    <location>
        <position position="122"/>
    </location>
</feature>
<feature type="active site" evidence="1">
    <location>
        <position position="140"/>
    </location>
</feature>
<evidence type="ECO:0000255" key="1">
    <source>
        <dbReference type="HAMAP-Rule" id="MF_00161"/>
    </source>
</evidence>
<gene>
    <name evidence="1" type="primary">lspA</name>
    <name type="ordered locus">FTF0914c</name>
</gene>
<reference key="1">
    <citation type="journal article" date="2007" name="PLoS ONE">
        <title>Genome sequencing shows that European isolates of Francisella tularensis subspecies tularensis are almost identical to US laboratory strain Schu S4.</title>
        <authorList>
            <person name="Chaudhuri R.R."/>
            <person name="Ren C.-P."/>
            <person name="Desmond L."/>
            <person name="Vincent G.A."/>
            <person name="Silman N.J."/>
            <person name="Brehm J.K."/>
            <person name="Elmore M.J."/>
            <person name="Hudson M.J."/>
            <person name="Forsman M."/>
            <person name="Isherwood K.E."/>
            <person name="Gurycova D."/>
            <person name="Minton N.P."/>
            <person name="Titball R.W."/>
            <person name="Pallen M.J."/>
            <person name="Vipond R."/>
        </authorList>
    </citation>
    <scope>NUCLEOTIDE SEQUENCE [LARGE SCALE GENOMIC DNA]</scope>
    <source>
        <strain>FSC 198</strain>
    </source>
</reference>
<accession>Q14HT3</accession>
<sequence>MNLLRPKLKYFILAILIIAADLYTKYLANTYLEFAQSLKITSFFNLTLLYNHGAAFSLLSNDQTSWQMIMFSTISLIAAIVLIYLIIKQPITEKINLFSFALILGGALGNFYDRAFQGYVIDFLDFHIGNYHWPSFNIADSAITCGVVILIAASLFTKKKS</sequence>
<dbReference type="EC" id="3.4.23.36" evidence="1"/>
<dbReference type="EMBL" id="AM286280">
    <property type="protein sequence ID" value="CAL08930.1"/>
    <property type="molecule type" value="Genomic_DNA"/>
</dbReference>
<dbReference type="RefSeq" id="WP_003014705.1">
    <property type="nucleotide sequence ID" value="NC_008245.1"/>
</dbReference>
<dbReference type="SMR" id="Q14HT3"/>
<dbReference type="KEGG" id="ftf:FTF0914c"/>
<dbReference type="HOGENOM" id="CLU_083252_4_0_6"/>
<dbReference type="UniPathway" id="UPA00665"/>
<dbReference type="GO" id="GO:0005886">
    <property type="term" value="C:plasma membrane"/>
    <property type="evidence" value="ECO:0007669"/>
    <property type="project" value="UniProtKB-SubCell"/>
</dbReference>
<dbReference type="GO" id="GO:0004190">
    <property type="term" value="F:aspartic-type endopeptidase activity"/>
    <property type="evidence" value="ECO:0007669"/>
    <property type="project" value="UniProtKB-UniRule"/>
</dbReference>
<dbReference type="GO" id="GO:0006508">
    <property type="term" value="P:proteolysis"/>
    <property type="evidence" value="ECO:0007669"/>
    <property type="project" value="UniProtKB-KW"/>
</dbReference>
<dbReference type="HAMAP" id="MF_00161">
    <property type="entry name" value="LspA"/>
    <property type="match status" value="1"/>
</dbReference>
<dbReference type="InterPro" id="IPR001872">
    <property type="entry name" value="Peptidase_A8"/>
</dbReference>
<dbReference type="NCBIfam" id="TIGR00077">
    <property type="entry name" value="lspA"/>
    <property type="match status" value="1"/>
</dbReference>
<dbReference type="PANTHER" id="PTHR33695">
    <property type="entry name" value="LIPOPROTEIN SIGNAL PEPTIDASE"/>
    <property type="match status" value="1"/>
</dbReference>
<dbReference type="PANTHER" id="PTHR33695:SF1">
    <property type="entry name" value="LIPOPROTEIN SIGNAL PEPTIDASE"/>
    <property type="match status" value="1"/>
</dbReference>
<dbReference type="Pfam" id="PF01252">
    <property type="entry name" value="Peptidase_A8"/>
    <property type="match status" value="1"/>
</dbReference>
<dbReference type="PRINTS" id="PR00781">
    <property type="entry name" value="LIPOSIGPTASE"/>
</dbReference>
<dbReference type="PROSITE" id="PS00855">
    <property type="entry name" value="SPASE_II"/>
    <property type="match status" value="1"/>
</dbReference>
<name>LSPA_FRAT1</name>
<proteinExistence type="inferred from homology"/>